<protein>
    <recommendedName>
        <fullName evidence="1">2-dehydro-3-deoxyphosphooctonate aldolase</fullName>
        <ecNumber evidence="1">2.5.1.55</ecNumber>
    </recommendedName>
    <alternativeName>
        <fullName evidence="1">3-deoxy-D-manno-octulosonic acid 8-phosphate synthase</fullName>
    </alternativeName>
    <alternativeName>
        <fullName evidence="1">KDO-8-phosphate synthase</fullName>
        <shortName evidence="1">KDO 8-P synthase</shortName>
        <shortName evidence="1">KDOPS</shortName>
    </alternativeName>
    <alternativeName>
        <fullName evidence="1">Phospho-2-dehydro-3-deoxyoctonate aldolase</fullName>
    </alternativeName>
</protein>
<accession>B8HXG7</accession>
<keyword id="KW-0963">Cytoplasm</keyword>
<keyword id="KW-0448">Lipopolysaccharide biosynthesis</keyword>
<keyword id="KW-0808">Transferase</keyword>
<organism>
    <name type="scientific">Cyanothece sp. (strain PCC 7425 / ATCC 29141)</name>
    <dbReference type="NCBI Taxonomy" id="395961"/>
    <lineage>
        <taxon>Bacteria</taxon>
        <taxon>Bacillati</taxon>
        <taxon>Cyanobacteriota</taxon>
        <taxon>Cyanophyceae</taxon>
        <taxon>Gomontiellales</taxon>
        <taxon>Cyanothecaceae</taxon>
        <taxon>Cyanothece</taxon>
    </lineage>
</organism>
<gene>
    <name evidence="1" type="primary">kdsA</name>
    <name type="ordered locus">Cyan7425_4199</name>
</gene>
<comment type="catalytic activity">
    <reaction evidence="1">
        <text>D-arabinose 5-phosphate + phosphoenolpyruvate + H2O = 3-deoxy-alpha-D-manno-2-octulosonate-8-phosphate + phosphate</text>
        <dbReference type="Rhea" id="RHEA:14053"/>
        <dbReference type="ChEBI" id="CHEBI:15377"/>
        <dbReference type="ChEBI" id="CHEBI:43474"/>
        <dbReference type="ChEBI" id="CHEBI:57693"/>
        <dbReference type="ChEBI" id="CHEBI:58702"/>
        <dbReference type="ChEBI" id="CHEBI:85985"/>
        <dbReference type="EC" id="2.5.1.55"/>
    </reaction>
</comment>
<comment type="pathway">
    <text evidence="1">Carbohydrate biosynthesis; 3-deoxy-D-manno-octulosonate biosynthesis; 3-deoxy-D-manno-octulosonate from D-ribulose 5-phosphate: step 2/3.</text>
</comment>
<comment type="pathway">
    <text evidence="1">Bacterial outer membrane biogenesis; lipopolysaccharide biosynthesis.</text>
</comment>
<comment type="subcellular location">
    <subcellularLocation>
        <location evidence="1">Cytoplasm</location>
    </subcellularLocation>
</comment>
<comment type="similarity">
    <text evidence="1">Belongs to the KdsA family.</text>
</comment>
<sequence length="273" mass="29963">MVKIQVTPDLSIGDGQPFALIGGPCVIESEDFCLKMADQIRQICDRLQISYIFKSSFDKANRTSIDSFRGQSLEDGLQTLQRVKEKIGVPVLTDIHESYQAAIVAEVVDVLQIPAFLCRQTDLLLAAAATGRVINVKKGQFLAPWDMQNVVKKLEQGGAQNILLTERGSSFGYNTLVVDFRSLPQMRALGYPVVFDATHSVQMPGGKGNSSGGQREFVPYLARAAVAVGIDALFMEIHENPEQALSDGPNMVYLSQLEAYLQQLLAIRTALAW</sequence>
<dbReference type="EC" id="2.5.1.55" evidence="1"/>
<dbReference type="EMBL" id="CP001344">
    <property type="protein sequence ID" value="ACL46512.1"/>
    <property type="molecule type" value="Genomic_DNA"/>
</dbReference>
<dbReference type="SMR" id="B8HXG7"/>
<dbReference type="STRING" id="395961.Cyan7425_4199"/>
<dbReference type="KEGG" id="cyn:Cyan7425_4199"/>
<dbReference type="eggNOG" id="COG2877">
    <property type="taxonomic scope" value="Bacteria"/>
</dbReference>
<dbReference type="HOGENOM" id="CLU_036666_0_0_3"/>
<dbReference type="OrthoDB" id="9780456at2"/>
<dbReference type="UniPathway" id="UPA00030"/>
<dbReference type="UniPathway" id="UPA00357">
    <property type="reaction ID" value="UER00474"/>
</dbReference>
<dbReference type="GO" id="GO:0005737">
    <property type="term" value="C:cytoplasm"/>
    <property type="evidence" value="ECO:0007669"/>
    <property type="project" value="UniProtKB-SubCell"/>
</dbReference>
<dbReference type="GO" id="GO:0008676">
    <property type="term" value="F:3-deoxy-8-phosphooctulonate synthase activity"/>
    <property type="evidence" value="ECO:0007669"/>
    <property type="project" value="UniProtKB-UniRule"/>
</dbReference>
<dbReference type="GO" id="GO:0019294">
    <property type="term" value="P:keto-3-deoxy-D-manno-octulosonic acid biosynthetic process"/>
    <property type="evidence" value="ECO:0007669"/>
    <property type="project" value="UniProtKB-UniRule"/>
</dbReference>
<dbReference type="Gene3D" id="3.20.20.70">
    <property type="entry name" value="Aldolase class I"/>
    <property type="match status" value="1"/>
</dbReference>
<dbReference type="HAMAP" id="MF_00056">
    <property type="entry name" value="KDO8P_synth"/>
    <property type="match status" value="1"/>
</dbReference>
<dbReference type="InterPro" id="IPR013785">
    <property type="entry name" value="Aldolase_TIM"/>
</dbReference>
<dbReference type="InterPro" id="IPR006218">
    <property type="entry name" value="DAHP1/KDSA"/>
</dbReference>
<dbReference type="InterPro" id="IPR006269">
    <property type="entry name" value="KDO8P_synthase"/>
</dbReference>
<dbReference type="NCBIfam" id="TIGR01362">
    <property type="entry name" value="KDO8P_synth"/>
    <property type="match status" value="1"/>
</dbReference>
<dbReference type="NCBIfam" id="NF003543">
    <property type="entry name" value="PRK05198.1"/>
    <property type="match status" value="1"/>
</dbReference>
<dbReference type="PANTHER" id="PTHR21057">
    <property type="entry name" value="PHOSPHO-2-DEHYDRO-3-DEOXYHEPTONATE ALDOLASE"/>
    <property type="match status" value="1"/>
</dbReference>
<dbReference type="Pfam" id="PF00793">
    <property type="entry name" value="DAHP_synth_1"/>
    <property type="match status" value="1"/>
</dbReference>
<dbReference type="SUPFAM" id="SSF51569">
    <property type="entry name" value="Aldolase"/>
    <property type="match status" value="1"/>
</dbReference>
<evidence type="ECO:0000255" key="1">
    <source>
        <dbReference type="HAMAP-Rule" id="MF_00056"/>
    </source>
</evidence>
<feature type="chain" id="PRO_1000117773" description="2-dehydro-3-deoxyphosphooctonate aldolase">
    <location>
        <begin position="1"/>
        <end position="273"/>
    </location>
</feature>
<proteinExistence type="inferred from homology"/>
<reference key="1">
    <citation type="journal article" date="2011" name="MBio">
        <title>Novel metabolic attributes of the genus Cyanothece, comprising a group of unicellular nitrogen-fixing Cyanobacteria.</title>
        <authorList>
            <person name="Bandyopadhyay A."/>
            <person name="Elvitigala T."/>
            <person name="Welsh E."/>
            <person name="Stockel J."/>
            <person name="Liberton M."/>
            <person name="Min H."/>
            <person name="Sherman L.A."/>
            <person name="Pakrasi H.B."/>
        </authorList>
    </citation>
    <scope>NUCLEOTIDE SEQUENCE [LARGE SCALE GENOMIC DNA]</scope>
    <source>
        <strain>PCC 7425 / ATCC 29141</strain>
    </source>
</reference>
<name>KDSA_CYAP4</name>